<evidence type="ECO:0000255" key="1">
    <source>
        <dbReference type="HAMAP-Rule" id="MF_01021"/>
    </source>
</evidence>
<name>HIS3_PSEAE</name>
<keyword id="KW-0028">Amino-acid biosynthesis</keyword>
<keyword id="KW-0963">Cytoplasm</keyword>
<keyword id="KW-0368">Histidine biosynthesis</keyword>
<keyword id="KW-0378">Hydrolase</keyword>
<keyword id="KW-0460">Magnesium</keyword>
<keyword id="KW-0479">Metal-binding</keyword>
<keyword id="KW-1185">Reference proteome</keyword>
<keyword id="KW-0862">Zinc</keyword>
<feature type="chain" id="PRO_0000136491" description="Phosphoribosyl-AMP cyclohydrolase">
    <location>
        <begin position="1"/>
        <end position="134"/>
    </location>
</feature>
<feature type="binding site" evidence="1">
    <location>
        <position position="77"/>
    </location>
    <ligand>
        <name>Mg(2+)</name>
        <dbReference type="ChEBI" id="CHEBI:18420"/>
    </ligand>
</feature>
<feature type="binding site" evidence="1">
    <location>
        <position position="78"/>
    </location>
    <ligand>
        <name>Zn(2+)</name>
        <dbReference type="ChEBI" id="CHEBI:29105"/>
        <note>ligand shared between dimeric partners</note>
    </ligand>
</feature>
<feature type="binding site" evidence="1">
    <location>
        <position position="79"/>
    </location>
    <ligand>
        <name>Mg(2+)</name>
        <dbReference type="ChEBI" id="CHEBI:18420"/>
    </ligand>
</feature>
<feature type="binding site" evidence="1">
    <location>
        <position position="81"/>
    </location>
    <ligand>
        <name>Mg(2+)</name>
        <dbReference type="ChEBI" id="CHEBI:18420"/>
    </ligand>
</feature>
<feature type="binding site" evidence="1">
    <location>
        <position position="95"/>
    </location>
    <ligand>
        <name>Zn(2+)</name>
        <dbReference type="ChEBI" id="CHEBI:29105"/>
        <note>ligand shared between dimeric partners</note>
    </ligand>
</feature>
<feature type="binding site" evidence="1">
    <location>
        <position position="102"/>
    </location>
    <ligand>
        <name>Zn(2+)</name>
        <dbReference type="ChEBI" id="CHEBI:29105"/>
        <note>ligand shared between dimeric partners</note>
    </ligand>
</feature>
<dbReference type="EC" id="3.5.4.19" evidence="1"/>
<dbReference type="EMBL" id="AE004091">
    <property type="protein sequence ID" value="AAG08451.1"/>
    <property type="molecule type" value="Genomic_DNA"/>
</dbReference>
<dbReference type="PIR" id="E83011">
    <property type="entry name" value="E83011"/>
</dbReference>
<dbReference type="RefSeq" id="NP_253753.1">
    <property type="nucleotide sequence ID" value="NC_002516.2"/>
</dbReference>
<dbReference type="RefSeq" id="WP_003095888.1">
    <property type="nucleotide sequence ID" value="NZ_QZGE01000002.1"/>
</dbReference>
<dbReference type="SMR" id="Q9HUB7"/>
<dbReference type="STRING" id="208964.PA5066"/>
<dbReference type="PaxDb" id="208964-PA5066"/>
<dbReference type="DNASU" id="878019"/>
<dbReference type="GeneID" id="878019"/>
<dbReference type="KEGG" id="pae:PA5066"/>
<dbReference type="PATRIC" id="fig|208964.12.peg.5310"/>
<dbReference type="PseudoCAP" id="PA5066"/>
<dbReference type="HOGENOM" id="CLU_048577_5_0_6"/>
<dbReference type="InParanoid" id="Q9HUB7"/>
<dbReference type="OrthoDB" id="9795769at2"/>
<dbReference type="PhylomeDB" id="Q9HUB7"/>
<dbReference type="BioCyc" id="PAER208964:G1FZ6-5182-MONOMER"/>
<dbReference type="UniPathway" id="UPA00031">
    <property type="reaction ID" value="UER00008"/>
</dbReference>
<dbReference type="Proteomes" id="UP000002438">
    <property type="component" value="Chromosome"/>
</dbReference>
<dbReference type="GO" id="GO:0005737">
    <property type="term" value="C:cytoplasm"/>
    <property type="evidence" value="ECO:0007669"/>
    <property type="project" value="UniProtKB-SubCell"/>
</dbReference>
<dbReference type="GO" id="GO:0000287">
    <property type="term" value="F:magnesium ion binding"/>
    <property type="evidence" value="ECO:0007669"/>
    <property type="project" value="UniProtKB-UniRule"/>
</dbReference>
<dbReference type="GO" id="GO:0004635">
    <property type="term" value="F:phosphoribosyl-AMP cyclohydrolase activity"/>
    <property type="evidence" value="ECO:0007669"/>
    <property type="project" value="UniProtKB-UniRule"/>
</dbReference>
<dbReference type="GO" id="GO:0008270">
    <property type="term" value="F:zinc ion binding"/>
    <property type="evidence" value="ECO:0007669"/>
    <property type="project" value="UniProtKB-UniRule"/>
</dbReference>
<dbReference type="GO" id="GO:0000105">
    <property type="term" value="P:L-histidine biosynthetic process"/>
    <property type="evidence" value="ECO:0007669"/>
    <property type="project" value="UniProtKB-UniRule"/>
</dbReference>
<dbReference type="FunFam" id="3.10.20.810:FF:000001">
    <property type="entry name" value="Histidine biosynthesis bifunctional protein HisIE"/>
    <property type="match status" value="1"/>
</dbReference>
<dbReference type="Gene3D" id="3.10.20.810">
    <property type="entry name" value="Phosphoribosyl-AMP cyclohydrolase"/>
    <property type="match status" value="1"/>
</dbReference>
<dbReference type="HAMAP" id="MF_01021">
    <property type="entry name" value="HisI"/>
    <property type="match status" value="1"/>
</dbReference>
<dbReference type="InterPro" id="IPR026660">
    <property type="entry name" value="PRA-CH"/>
</dbReference>
<dbReference type="InterPro" id="IPR002496">
    <property type="entry name" value="PRib_AMP_CycHydrolase_dom"/>
</dbReference>
<dbReference type="InterPro" id="IPR038019">
    <property type="entry name" value="PRib_AMP_CycHydrolase_sf"/>
</dbReference>
<dbReference type="NCBIfam" id="NF000768">
    <property type="entry name" value="PRK00051.1"/>
    <property type="match status" value="1"/>
</dbReference>
<dbReference type="PANTHER" id="PTHR42945">
    <property type="entry name" value="HISTIDINE BIOSYNTHESIS BIFUNCTIONAL PROTEIN"/>
    <property type="match status" value="1"/>
</dbReference>
<dbReference type="PANTHER" id="PTHR42945:SF1">
    <property type="entry name" value="HISTIDINE BIOSYNTHESIS BIFUNCTIONAL PROTEIN HIS7"/>
    <property type="match status" value="1"/>
</dbReference>
<dbReference type="Pfam" id="PF01502">
    <property type="entry name" value="PRA-CH"/>
    <property type="match status" value="1"/>
</dbReference>
<dbReference type="SUPFAM" id="SSF141734">
    <property type="entry name" value="HisI-like"/>
    <property type="match status" value="1"/>
</dbReference>
<organism>
    <name type="scientific">Pseudomonas aeruginosa (strain ATCC 15692 / DSM 22644 / CIP 104116 / JCM 14847 / LMG 12228 / 1C / PRS 101 / PAO1)</name>
    <dbReference type="NCBI Taxonomy" id="208964"/>
    <lineage>
        <taxon>Bacteria</taxon>
        <taxon>Pseudomonadati</taxon>
        <taxon>Pseudomonadota</taxon>
        <taxon>Gammaproteobacteria</taxon>
        <taxon>Pseudomonadales</taxon>
        <taxon>Pseudomonadaceae</taxon>
        <taxon>Pseudomonas</taxon>
    </lineage>
</organism>
<protein>
    <recommendedName>
        <fullName evidence="1">Phosphoribosyl-AMP cyclohydrolase</fullName>
        <shortName evidence="1">PRA-CH</shortName>
        <ecNumber evidence="1">3.5.4.19</ecNumber>
    </recommendedName>
</protein>
<reference key="1">
    <citation type="journal article" date="2000" name="Nature">
        <title>Complete genome sequence of Pseudomonas aeruginosa PAO1, an opportunistic pathogen.</title>
        <authorList>
            <person name="Stover C.K."/>
            <person name="Pham X.-Q.T."/>
            <person name="Erwin A.L."/>
            <person name="Mizoguchi S.D."/>
            <person name="Warrener P."/>
            <person name="Hickey M.J."/>
            <person name="Brinkman F.S.L."/>
            <person name="Hufnagle W.O."/>
            <person name="Kowalik D.J."/>
            <person name="Lagrou M."/>
            <person name="Garber R.L."/>
            <person name="Goltry L."/>
            <person name="Tolentino E."/>
            <person name="Westbrock-Wadman S."/>
            <person name="Yuan Y."/>
            <person name="Brody L.L."/>
            <person name="Coulter S.N."/>
            <person name="Folger K.R."/>
            <person name="Kas A."/>
            <person name="Larbig K."/>
            <person name="Lim R.M."/>
            <person name="Smith K.A."/>
            <person name="Spencer D.H."/>
            <person name="Wong G.K.-S."/>
            <person name="Wu Z."/>
            <person name="Paulsen I.T."/>
            <person name="Reizer J."/>
            <person name="Saier M.H. Jr."/>
            <person name="Hancock R.E.W."/>
            <person name="Lory S."/>
            <person name="Olson M.V."/>
        </authorList>
    </citation>
    <scope>NUCLEOTIDE SEQUENCE [LARGE SCALE GENOMIC DNA]</scope>
    <source>
        <strain>ATCC 15692 / DSM 22644 / CIP 104116 / JCM 14847 / LMG 12228 / 1C / PRS 101 / PAO1</strain>
    </source>
</reference>
<comment type="function">
    <text evidence="1">Catalyzes the hydrolysis of the adenine ring of phosphoribosyl-AMP.</text>
</comment>
<comment type="catalytic activity">
    <reaction evidence="1">
        <text>1-(5-phospho-beta-D-ribosyl)-5'-AMP + H2O = 1-(5-phospho-beta-D-ribosyl)-5-[(5-phospho-beta-D-ribosylamino)methylideneamino]imidazole-4-carboxamide</text>
        <dbReference type="Rhea" id="RHEA:20049"/>
        <dbReference type="ChEBI" id="CHEBI:15377"/>
        <dbReference type="ChEBI" id="CHEBI:58435"/>
        <dbReference type="ChEBI" id="CHEBI:59457"/>
        <dbReference type="EC" id="3.5.4.19"/>
    </reaction>
</comment>
<comment type="cofactor">
    <cofactor evidence="1">
        <name>Mg(2+)</name>
        <dbReference type="ChEBI" id="CHEBI:18420"/>
    </cofactor>
    <text evidence="1">Binds 1 Mg(2+) ion per subunit.</text>
</comment>
<comment type="cofactor">
    <cofactor evidence="1">
        <name>Zn(2+)</name>
        <dbReference type="ChEBI" id="CHEBI:29105"/>
    </cofactor>
    <text evidence="1">Binds 1 zinc ion per subunit.</text>
</comment>
<comment type="pathway">
    <text evidence="1">Amino-acid biosynthesis; L-histidine biosynthesis; L-histidine from 5-phospho-alpha-D-ribose 1-diphosphate: step 3/9.</text>
</comment>
<comment type="subunit">
    <text evidence="1">Homodimer.</text>
</comment>
<comment type="subcellular location">
    <subcellularLocation>
        <location evidence="1">Cytoplasm</location>
    </subcellularLocation>
</comment>
<comment type="similarity">
    <text evidence="1">Belongs to the PRA-CH family.</text>
</comment>
<proteinExistence type="inferred from homology"/>
<gene>
    <name evidence="1" type="primary">hisI</name>
    <name type="ordered locus">PA5066</name>
</gene>
<sequence>MKDWLDEIHWNADGLVPAIAQDHETGRVLMMAWMNREALALTASENRAIYWSRSRGKLWRKGEESGHVQKLHELRLDCDADVVILMVEQVGGIACHTGRESCFYRVFENGAWKTVDPVLKDPDAIYEHAGHHHE</sequence>
<accession>Q9HUB7</accession>